<feature type="chain" id="PRO_0000305185" description="Uncharacterized protein At1g66480">
    <location>
        <begin position="1"/>
        <end position="225"/>
    </location>
</feature>
<feature type="splice variant" id="VSP_028262" description="In isoform 2." evidence="1">
    <original>KQVSFAG</original>
    <variation>VILVFLL</variation>
    <location>
        <begin position="204"/>
        <end position="210"/>
    </location>
</feature>
<feature type="splice variant" id="VSP_028263" description="In isoform 2." evidence="1">
    <location>
        <begin position="211"/>
        <end position="225"/>
    </location>
</feature>
<feature type="sequence conflict" description="In Ref. 4; BAE99768." evidence="1" ref="4">
    <original>M</original>
    <variation>L</variation>
    <location>
        <position position="97"/>
    </location>
</feature>
<gene>
    <name type="ordered locus">At1g66480</name>
    <name type="ORF">F28G11.8</name>
</gene>
<name>Y1648_ARATH</name>
<protein>
    <recommendedName>
        <fullName>Uncharacterized protein At1g66480</fullName>
    </recommendedName>
</protein>
<organism>
    <name type="scientific">Arabidopsis thaliana</name>
    <name type="common">Mouse-ear cress</name>
    <dbReference type="NCBI Taxonomy" id="3702"/>
    <lineage>
        <taxon>Eukaryota</taxon>
        <taxon>Viridiplantae</taxon>
        <taxon>Streptophyta</taxon>
        <taxon>Embryophyta</taxon>
        <taxon>Tracheophyta</taxon>
        <taxon>Spermatophyta</taxon>
        <taxon>Magnoliopsida</taxon>
        <taxon>eudicotyledons</taxon>
        <taxon>Gunneridae</taxon>
        <taxon>Pentapetalae</taxon>
        <taxon>rosids</taxon>
        <taxon>malvids</taxon>
        <taxon>Brassicales</taxon>
        <taxon>Brassicaceae</taxon>
        <taxon>Camelineae</taxon>
        <taxon>Arabidopsis</taxon>
    </lineage>
</organism>
<proteinExistence type="evidence at transcript level"/>
<keyword id="KW-0025">Alternative splicing</keyword>
<keyword id="KW-1185">Reference proteome</keyword>
<reference key="1">
    <citation type="journal article" date="2000" name="Nature">
        <title>Sequence and analysis of chromosome 1 of the plant Arabidopsis thaliana.</title>
        <authorList>
            <person name="Theologis A."/>
            <person name="Ecker J.R."/>
            <person name="Palm C.J."/>
            <person name="Federspiel N.A."/>
            <person name="Kaul S."/>
            <person name="White O."/>
            <person name="Alonso J."/>
            <person name="Altafi H."/>
            <person name="Araujo R."/>
            <person name="Bowman C.L."/>
            <person name="Brooks S.Y."/>
            <person name="Buehler E."/>
            <person name="Chan A."/>
            <person name="Chao Q."/>
            <person name="Chen H."/>
            <person name="Cheuk R.F."/>
            <person name="Chin C.W."/>
            <person name="Chung M.K."/>
            <person name="Conn L."/>
            <person name="Conway A.B."/>
            <person name="Conway A.R."/>
            <person name="Creasy T.H."/>
            <person name="Dewar K."/>
            <person name="Dunn P."/>
            <person name="Etgu P."/>
            <person name="Feldblyum T.V."/>
            <person name="Feng J.-D."/>
            <person name="Fong B."/>
            <person name="Fujii C.Y."/>
            <person name="Gill J.E."/>
            <person name="Goldsmith A.D."/>
            <person name="Haas B."/>
            <person name="Hansen N.F."/>
            <person name="Hughes B."/>
            <person name="Huizar L."/>
            <person name="Hunter J.L."/>
            <person name="Jenkins J."/>
            <person name="Johnson-Hopson C."/>
            <person name="Khan S."/>
            <person name="Khaykin E."/>
            <person name="Kim C.J."/>
            <person name="Koo H.L."/>
            <person name="Kremenetskaia I."/>
            <person name="Kurtz D.B."/>
            <person name="Kwan A."/>
            <person name="Lam B."/>
            <person name="Langin-Hooper S."/>
            <person name="Lee A."/>
            <person name="Lee J.M."/>
            <person name="Lenz C.A."/>
            <person name="Li J.H."/>
            <person name="Li Y.-P."/>
            <person name="Lin X."/>
            <person name="Liu S.X."/>
            <person name="Liu Z.A."/>
            <person name="Luros J.S."/>
            <person name="Maiti R."/>
            <person name="Marziali A."/>
            <person name="Militscher J."/>
            <person name="Miranda M."/>
            <person name="Nguyen M."/>
            <person name="Nierman W.C."/>
            <person name="Osborne B.I."/>
            <person name="Pai G."/>
            <person name="Peterson J."/>
            <person name="Pham P.K."/>
            <person name="Rizzo M."/>
            <person name="Rooney T."/>
            <person name="Rowley D."/>
            <person name="Sakano H."/>
            <person name="Salzberg S.L."/>
            <person name="Schwartz J.R."/>
            <person name="Shinn P."/>
            <person name="Southwick A.M."/>
            <person name="Sun H."/>
            <person name="Tallon L.J."/>
            <person name="Tambunga G."/>
            <person name="Toriumi M.J."/>
            <person name="Town C.D."/>
            <person name="Utterback T."/>
            <person name="Van Aken S."/>
            <person name="Vaysberg M."/>
            <person name="Vysotskaia V.S."/>
            <person name="Walker M."/>
            <person name="Wu D."/>
            <person name="Yu G."/>
            <person name="Fraser C.M."/>
            <person name="Venter J.C."/>
            <person name="Davis R.W."/>
        </authorList>
    </citation>
    <scope>NUCLEOTIDE SEQUENCE [LARGE SCALE GENOMIC DNA]</scope>
    <source>
        <strain>cv. Columbia</strain>
    </source>
</reference>
<reference key="2">
    <citation type="journal article" date="2017" name="Plant J.">
        <title>Araport11: a complete reannotation of the Arabidopsis thaliana reference genome.</title>
        <authorList>
            <person name="Cheng C.Y."/>
            <person name="Krishnakumar V."/>
            <person name="Chan A.P."/>
            <person name="Thibaud-Nissen F."/>
            <person name="Schobel S."/>
            <person name="Town C.D."/>
        </authorList>
    </citation>
    <scope>GENOME REANNOTATION</scope>
    <source>
        <strain>cv. Columbia</strain>
    </source>
</reference>
<reference key="3">
    <citation type="submission" date="2004-04" db="EMBL/GenBank/DDBJ databases">
        <title>Arabidopsis ORF clones.</title>
        <authorList>
            <person name="Shinn P."/>
            <person name="Chen H."/>
            <person name="Cheuk R.F."/>
            <person name="Kim C.J."/>
            <person name="Ecker J.R."/>
        </authorList>
    </citation>
    <scope>NUCLEOTIDE SEQUENCE [LARGE SCALE MRNA] (ISOFORM 1)</scope>
    <source>
        <strain>cv. Columbia</strain>
    </source>
</reference>
<reference key="4">
    <citation type="submission" date="2006-07" db="EMBL/GenBank/DDBJ databases">
        <title>Large-scale analysis of RIKEN Arabidopsis full-length (RAFL) cDNAs.</title>
        <authorList>
            <person name="Totoki Y."/>
            <person name="Seki M."/>
            <person name="Ishida J."/>
            <person name="Nakajima M."/>
            <person name="Enju A."/>
            <person name="Kamiya A."/>
            <person name="Narusaka M."/>
            <person name="Shin-i T."/>
            <person name="Nakagawa M."/>
            <person name="Sakamoto N."/>
            <person name="Oishi K."/>
            <person name="Kohara Y."/>
            <person name="Kobayashi M."/>
            <person name="Toyoda A."/>
            <person name="Sakaki Y."/>
            <person name="Sakurai T."/>
            <person name="Iida K."/>
            <person name="Akiyama K."/>
            <person name="Satou M."/>
            <person name="Toyoda T."/>
            <person name="Konagaya A."/>
            <person name="Carninci P."/>
            <person name="Kawai J."/>
            <person name="Hayashizaki Y."/>
            <person name="Shinozaki K."/>
        </authorList>
    </citation>
    <scope>NUCLEOTIDE SEQUENCE [LARGE SCALE MRNA] (ISOROFM 2)</scope>
    <source>
        <strain>cv. Columbia</strain>
    </source>
</reference>
<comment type="alternative products">
    <event type="alternative splicing"/>
    <isoform>
        <id>Q6NLC8-1</id>
        <name>1</name>
        <sequence type="displayed"/>
    </isoform>
    <isoform>
        <id>Q6NLC8-2</id>
        <name>2</name>
        <sequence type="described" ref="VSP_028262 VSP_028263"/>
    </isoform>
</comment>
<comment type="sequence caution" evidence="1">
    <conflict type="erroneous gene model prediction">
        <sequence resource="EMBL-CDS" id="AAG51153"/>
    </conflict>
</comment>
<evidence type="ECO:0000305" key="1"/>
<dbReference type="EMBL" id="AC074025">
    <property type="protein sequence ID" value="AAG51153.1"/>
    <property type="status" value="ALT_SEQ"/>
    <property type="molecule type" value="Genomic_DNA"/>
</dbReference>
<dbReference type="EMBL" id="CP002684">
    <property type="protein sequence ID" value="AEE34514.1"/>
    <property type="molecule type" value="Genomic_DNA"/>
</dbReference>
<dbReference type="EMBL" id="BT011775">
    <property type="protein sequence ID" value="AAS65946.1"/>
    <property type="molecule type" value="mRNA"/>
</dbReference>
<dbReference type="EMBL" id="BT012406">
    <property type="protein sequence ID" value="AAS92322.1"/>
    <property type="molecule type" value="mRNA"/>
</dbReference>
<dbReference type="EMBL" id="AK227786">
    <property type="protein sequence ID" value="BAE99768.1"/>
    <property type="molecule type" value="mRNA"/>
</dbReference>
<dbReference type="RefSeq" id="NP_176821.2">
    <molecule id="Q6NLC8-1"/>
    <property type="nucleotide sequence ID" value="NM_105319.4"/>
</dbReference>
<dbReference type="SMR" id="Q6NLC8"/>
<dbReference type="BioGRID" id="28187">
    <property type="interactions" value="2"/>
</dbReference>
<dbReference type="FunCoup" id="Q6NLC8">
    <property type="interactions" value="11"/>
</dbReference>
<dbReference type="IntAct" id="Q6NLC8">
    <property type="interactions" value="1"/>
</dbReference>
<dbReference type="STRING" id="3702.Q6NLC8"/>
<dbReference type="iPTMnet" id="Q6NLC8"/>
<dbReference type="MetOSite" id="Q6NLC8"/>
<dbReference type="PaxDb" id="3702-AT1G66480.1"/>
<dbReference type="ProteomicsDB" id="242799">
    <molecule id="Q6NLC8-1"/>
</dbReference>
<dbReference type="EnsemblPlants" id="AT1G66480.1">
    <molecule id="Q6NLC8-1"/>
    <property type="protein sequence ID" value="AT1G66480.1"/>
    <property type="gene ID" value="AT1G66480"/>
</dbReference>
<dbReference type="GeneID" id="842966"/>
<dbReference type="Gramene" id="AT1G66480.1">
    <molecule id="Q6NLC8-1"/>
    <property type="protein sequence ID" value="AT1G66480.1"/>
    <property type="gene ID" value="AT1G66480"/>
</dbReference>
<dbReference type="KEGG" id="ath:AT1G66480"/>
<dbReference type="Araport" id="AT1G66480"/>
<dbReference type="TAIR" id="AT1G66480"/>
<dbReference type="eggNOG" id="ENOG502RP95">
    <property type="taxonomic scope" value="Eukaryota"/>
</dbReference>
<dbReference type="HOGENOM" id="CLU_083135_1_0_1"/>
<dbReference type="InParanoid" id="Q6NLC8"/>
<dbReference type="OMA" id="MMSEEYS"/>
<dbReference type="PhylomeDB" id="Q6NLC8"/>
<dbReference type="PRO" id="PR:Q6NLC8"/>
<dbReference type="Proteomes" id="UP000006548">
    <property type="component" value="Chromosome 1"/>
</dbReference>
<dbReference type="ExpressionAtlas" id="Q6NLC8">
    <property type="expression patterns" value="baseline and differential"/>
</dbReference>
<dbReference type="GO" id="GO:0009620">
    <property type="term" value="P:response to fungus"/>
    <property type="evidence" value="ECO:0000270"/>
    <property type="project" value="TAIR"/>
</dbReference>
<dbReference type="InterPro" id="IPR025322">
    <property type="entry name" value="PADRE_dom"/>
</dbReference>
<dbReference type="PANTHER" id="PTHR33148:SF6">
    <property type="entry name" value="DUF4228 DOMAIN-CONTAINING PROTEIN"/>
    <property type="match status" value="1"/>
</dbReference>
<dbReference type="PANTHER" id="PTHR33148">
    <property type="entry name" value="PLASTID MOVEMENT IMPAIRED PROTEIN-RELATED"/>
    <property type="match status" value="1"/>
</dbReference>
<dbReference type="Pfam" id="PF14009">
    <property type="entry name" value="PADRE"/>
    <property type="match status" value="1"/>
</dbReference>
<sequence>MGNSITVKRKRAKVMKIDGETFRIKTPVTAREVTADYPGYVLLDSQAVKHFGVRSKPLEPNQTLKPKKTYFLVELPKLPPETTAVDTENKLPYRRVMSGIHVGAKERLDMLMLSRRTVSDVTIGRSDGGDGFGPELGPGHTSVRLRLPRSQITKLMEENNNDASAIAEKILGIYMERSGELGGGRGGVDGRRELGSGEIKAREKQVSFAGEGGRELPVLWSRSGK</sequence>
<accession>Q6NLC8</accession>
<accession>Q0WSY0</accession>
<accession>Q9C708</accession>